<evidence type="ECO:0000255" key="1">
    <source>
        <dbReference type="HAMAP-Rule" id="MF_02004"/>
    </source>
</evidence>
<sequence length="919" mass="103151">MVGSRSASHQKTVKIVPMTNRADKLPKSWDPQAVEKDLYEGWVEKGYFTADPSSSKPAFSIVLPPPNVTGQLHMGHALDHTLMDGIARRKRMQGYEVLWLPGMDHAGIATQTKVEAMLKETEGKSRWDYSREEFIEHVWEWKRKFGGTIGTQMRAIGDSVDWSRERFTLDEGLSRAVQTIFKQMYDRGMIYQANRLVNWSPILETAVSDIEVVYKDVEGELVSIRYGSLNDDEPHVIVATTRVETMLGDVAVAVHPDDERYADLVGTTLPHPFLPDRQMIVVADDYVDPEFGTGAVKITPAHDPNDYALGLRHNLDMPNIMDATGHIAGTGTQFDGMDRFEARVKIREALAEQGRIVKEVRPYVHSVGHSERSGEPIEPRLSLQWWVKVEKLATMAGDAIREGDTVIHPKSSEPRYFDWVDDMHDWCISRQLWWGHRIPIWYGPEDAEGNRDIVCVGPDEQPPAGYEQDPDVLDTWFSSALWPFSTMGWPDKTPELDKFYPTSVLVTAYDILFFWVARMMMFGTLAGETTPEILGQGTDGRPQIPFNDLFLHGLVRDEQGRKMSKSLGNGIDPMDWVERFGADALRFTLARGANPGVDLPVGEDSAQSSRNFATKLFNATKFALMNGAEVGTLPERSELTDADRWILDRLEEVRVSVDDYFDRYQFAKGNEALYQFAWGEFCDWYLEIAKVQIPRDMEAASAQEQARGRNTQIVLGQVLDALLRMLHPAMPFVTEVLWKALTDGESLNVAEWPTAAMTNGGVATDEVAARRMADVEKLVTEIRRFRSDQGVKPSQKVPGAVDFAAADLAAQEDLVRSLARLDQPAEDFAASASIEVRLSQATIEISVDTSGTVDKEAERKRLDKDLAAATKELETTAKKLGNESFLAKAPEAVVAKIRERQQIAQEEVARISARLEELK</sequence>
<accession>Q6NFV0</accession>
<name>SYV_CORDI</name>
<feature type="chain" id="PRO_0000224465" description="Valine--tRNA ligase">
    <location>
        <begin position="1"/>
        <end position="919"/>
    </location>
</feature>
<feature type="coiled-coil region" evidence="1">
    <location>
        <begin position="852"/>
        <end position="919"/>
    </location>
</feature>
<feature type="short sequence motif" description="'HIGH' region">
    <location>
        <begin position="66"/>
        <end position="76"/>
    </location>
</feature>
<feature type="short sequence motif" description="'KMSKS' region">
    <location>
        <begin position="562"/>
        <end position="566"/>
    </location>
</feature>
<feature type="binding site" evidence="1">
    <location>
        <position position="565"/>
    </location>
    <ligand>
        <name>ATP</name>
        <dbReference type="ChEBI" id="CHEBI:30616"/>
    </ligand>
</feature>
<protein>
    <recommendedName>
        <fullName evidence="1">Valine--tRNA ligase</fullName>
        <ecNumber evidence="1">6.1.1.9</ecNumber>
    </recommendedName>
    <alternativeName>
        <fullName evidence="1">Valyl-tRNA synthetase</fullName>
        <shortName evidence="1">ValRS</shortName>
    </alternativeName>
</protein>
<organism>
    <name type="scientific">Corynebacterium diphtheriae (strain ATCC 700971 / NCTC 13129 / Biotype gravis)</name>
    <dbReference type="NCBI Taxonomy" id="257309"/>
    <lineage>
        <taxon>Bacteria</taxon>
        <taxon>Bacillati</taxon>
        <taxon>Actinomycetota</taxon>
        <taxon>Actinomycetes</taxon>
        <taxon>Mycobacteriales</taxon>
        <taxon>Corynebacteriaceae</taxon>
        <taxon>Corynebacterium</taxon>
    </lineage>
</organism>
<comment type="function">
    <text evidence="1">Catalyzes the attachment of valine to tRNA(Val). As ValRS can inadvertently accommodate and process structurally similar amino acids such as threonine, to avoid such errors, it has a 'posttransfer' editing activity that hydrolyzes mischarged Thr-tRNA(Val) in a tRNA-dependent manner.</text>
</comment>
<comment type="catalytic activity">
    <reaction evidence="1">
        <text>tRNA(Val) + L-valine + ATP = L-valyl-tRNA(Val) + AMP + diphosphate</text>
        <dbReference type="Rhea" id="RHEA:10704"/>
        <dbReference type="Rhea" id="RHEA-COMP:9672"/>
        <dbReference type="Rhea" id="RHEA-COMP:9708"/>
        <dbReference type="ChEBI" id="CHEBI:30616"/>
        <dbReference type="ChEBI" id="CHEBI:33019"/>
        <dbReference type="ChEBI" id="CHEBI:57762"/>
        <dbReference type="ChEBI" id="CHEBI:78442"/>
        <dbReference type="ChEBI" id="CHEBI:78537"/>
        <dbReference type="ChEBI" id="CHEBI:456215"/>
        <dbReference type="EC" id="6.1.1.9"/>
    </reaction>
</comment>
<comment type="subunit">
    <text evidence="1">Monomer.</text>
</comment>
<comment type="subcellular location">
    <subcellularLocation>
        <location evidence="1">Cytoplasm</location>
    </subcellularLocation>
</comment>
<comment type="domain">
    <text evidence="1">ValRS has two distinct active sites: one for aminoacylation and one for editing. The misactivated threonine is translocated from the active site to the editing site.</text>
</comment>
<comment type="domain">
    <text evidence="1">The C-terminal coiled-coil domain is crucial for aminoacylation activity.</text>
</comment>
<comment type="similarity">
    <text evidence="1">Belongs to the class-I aminoacyl-tRNA synthetase family. ValS type 1 subfamily.</text>
</comment>
<proteinExistence type="inferred from homology"/>
<reference key="1">
    <citation type="journal article" date="2003" name="Nucleic Acids Res.">
        <title>The complete genome sequence and analysis of Corynebacterium diphtheriae NCTC13129.</title>
        <authorList>
            <person name="Cerdeno-Tarraga A.-M."/>
            <person name="Efstratiou A."/>
            <person name="Dover L.G."/>
            <person name="Holden M.T.G."/>
            <person name="Pallen M.J."/>
            <person name="Bentley S.D."/>
            <person name="Besra G.S."/>
            <person name="Churcher C.M."/>
            <person name="James K.D."/>
            <person name="De Zoysa A."/>
            <person name="Chillingworth T."/>
            <person name="Cronin A."/>
            <person name="Dowd L."/>
            <person name="Feltwell T."/>
            <person name="Hamlin N."/>
            <person name="Holroyd S."/>
            <person name="Jagels K."/>
            <person name="Moule S."/>
            <person name="Quail M.A."/>
            <person name="Rabbinowitsch E."/>
            <person name="Rutherford K.M."/>
            <person name="Thomson N.R."/>
            <person name="Unwin L."/>
            <person name="Whitehead S."/>
            <person name="Barrell B.G."/>
            <person name="Parkhill J."/>
        </authorList>
    </citation>
    <scope>NUCLEOTIDE SEQUENCE [LARGE SCALE GENOMIC DNA]</scope>
    <source>
        <strain>ATCC 700971 / NCTC 13129 / Biotype gravis</strain>
    </source>
</reference>
<gene>
    <name evidence="1" type="primary">valS</name>
    <name type="ordered locus">DIP1786</name>
</gene>
<dbReference type="EC" id="6.1.1.9" evidence="1"/>
<dbReference type="EMBL" id="BX248359">
    <property type="protein sequence ID" value="CAE50316.1"/>
    <property type="molecule type" value="Genomic_DNA"/>
</dbReference>
<dbReference type="SMR" id="Q6NFV0"/>
<dbReference type="STRING" id="257309.DIP1786"/>
<dbReference type="KEGG" id="cdi:DIP1786"/>
<dbReference type="HOGENOM" id="CLU_001493_0_2_11"/>
<dbReference type="Proteomes" id="UP000002198">
    <property type="component" value="Chromosome"/>
</dbReference>
<dbReference type="GO" id="GO:0005829">
    <property type="term" value="C:cytosol"/>
    <property type="evidence" value="ECO:0007669"/>
    <property type="project" value="TreeGrafter"/>
</dbReference>
<dbReference type="GO" id="GO:0002161">
    <property type="term" value="F:aminoacyl-tRNA deacylase activity"/>
    <property type="evidence" value="ECO:0007669"/>
    <property type="project" value="InterPro"/>
</dbReference>
<dbReference type="GO" id="GO:0005524">
    <property type="term" value="F:ATP binding"/>
    <property type="evidence" value="ECO:0007669"/>
    <property type="project" value="UniProtKB-UniRule"/>
</dbReference>
<dbReference type="GO" id="GO:0004832">
    <property type="term" value="F:valine-tRNA ligase activity"/>
    <property type="evidence" value="ECO:0007669"/>
    <property type="project" value="UniProtKB-UniRule"/>
</dbReference>
<dbReference type="GO" id="GO:0006438">
    <property type="term" value="P:valyl-tRNA aminoacylation"/>
    <property type="evidence" value="ECO:0007669"/>
    <property type="project" value="UniProtKB-UniRule"/>
</dbReference>
<dbReference type="CDD" id="cd07962">
    <property type="entry name" value="Anticodon_Ia_Val"/>
    <property type="match status" value="1"/>
</dbReference>
<dbReference type="CDD" id="cd00817">
    <property type="entry name" value="ValRS_core"/>
    <property type="match status" value="1"/>
</dbReference>
<dbReference type="FunFam" id="1.10.287.380:FF:000001">
    <property type="entry name" value="Valine--tRNA ligase"/>
    <property type="match status" value="1"/>
</dbReference>
<dbReference type="FunFam" id="3.40.50.620:FF:000032">
    <property type="entry name" value="Valine--tRNA ligase"/>
    <property type="match status" value="1"/>
</dbReference>
<dbReference type="FunFam" id="3.40.50.620:FF:000098">
    <property type="entry name" value="Valine--tRNA ligase"/>
    <property type="match status" value="1"/>
</dbReference>
<dbReference type="Gene3D" id="3.40.50.620">
    <property type="entry name" value="HUPs"/>
    <property type="match status" value="2"/>
</dbReference>
<dbReference type="Gene3D" id="1.10.730.10">
    <property type="entry name" value="Isoleucyl-tRNA Synthetase, Domain 1"/>
    <property type="match status" value="1"/>
</dbReference>
<dbReference type="Gene3D" id="1.10.287.380">
    <property type="entry name" value="Valyl-tRNA synthetase, C-terminal domain"/>
    <property type="match status" value="1"/>
</dbReference>
<dbReference type="HAMAP" id="MF_02004">
    <property type="entry name" value="Val_tRNA_synth_type1"/>
    <property type="match status" value="1"/>
</dbReference>
<dbReference type="InterPro" id="IPR001412">
    <property type="entry name" value="aa-tRNA-synth_I_CS"/>
</dbReference>
<dbReference type="InterPro" id="IPR002300">
    <property type="entry name" value="aa-tRNA-synth_Ia"/>
</dbReference>
<dbReference type="InterPro" id="IPR033705">
    <property type="entry name" value="Anticodon_Ia_Val"/>
</dbReference>
<dbReference type="InterPro" id="IPR013155">
    <property type="entry name" value="M/V/L/I-tRNA-synth_anticd-bd"/>
</dbReference>
<dbReference type="InterPro" id="IPR014729">
    <property type="entry name" value="Rossmann-like_a/b/a_fold"/>
</dbReference>
<dbReference type="InterPro" id="IPR010978">
    <property type="entry name" value="tRNA-bd_arm"/>
</dbReference>
<dbReference type="InterPro" id="IPR009080">
    <property type="entry name" value="tRNAsynth_Ia_anticodon-bd"/>
</dbReference>
<dbReference type="InterPro" id="IPR037118">
    <property type="entry name" value="Val-tRNA_synth_C_sf"/>
</dbReference>
<dbReference type="InterPro" id="IPR019499">
    <property type="entry name" value="Val-tRNA_synth_tRNA-bd"/>
</dbReference>
<dbReference type="InterPro" id="IPR009008">
    <property type="entry name" value="Val/Leu/Ile-tRNA-synth_edit"/>
</dbReference>
<dbReference type="InterPro" id="IPR002303">
    <property type="entry name" value="Valyl-tRNA_ligase"/>
</dbReference>
<dbReference type="NCBIfam" id="NF004349">
    <property type="entry name" value="PRK05729.1"/>
    <property type="match status" value="1"/>
</dbReference>
<dbReference type="NCBIfam" id="TIGR00422">
    <property type="entry name" value="valS"/>
    <property type="match status" value="1"/>
</dbReference>
<dbReference type="PANTHER" id="PTHR11946:SF93">
    <property type="entry name" value="VALINE--TRNA LIGASE, CHLOROPLASTIC_MITOCHONDRIAL 2"/>
    <property type="match status" value="1"/>
</dbReference>
<dbReference type="PANTHER" id="PTHR11946">
    <property type="entry name" value="VALYL-TRNA SYNTHETASES"/>
    <property type="match status" value="1"/>
</dbReference>
<dbReference type="Pfam" id="PF08264">
    <property type="entry name" value="Anticodon_1"/>
    <property type="match status" value="1"/>
</dbReference>
<dbReference type="Pfam" id="PF00133">
    <property type="entry name" value="tRNA-synt_1"/>
    <property type="match status" value="2"/>
</dbReference>
<dbReference type="Pfam" id="PF10458">
    <property type="entry name" value="Val_tRNA-synt_C"/>
    <property type="match status" value="1"/>
</dbReference>
<dbReference type="PRINTS" id="PR00986">
    <property type="entry name" value="TRNASYNTHVAL"/>
</dbReference>
<dbReference type="SUPFAM" id="SSF47323">
    <property type="entry name" value="Anticodon-binding domain of a subclass of class I aminoacyl-tRNA synthetases"/>
    <property type="match status" value="1"/>
</dbReference>
<dbReference type="SUPFAM" id="SSF52374">
    <property type="entry name" value="Nucleotidylyl transferase"/>
    <property type="match status" value="1"/>
</dbReference>
<dbReference type="SUPFAM" id="SSF46589">
    <property type="entry name" value="tRNA-binding arm"/>
    <property type="match status" value="1"/>
</dbReference>
<dbReference type="SUPFAM" id="SSF50677">
    <property type="entry name" value="ValRS/IleRS/LeuRS editing domain"/>
    <property type="match status" value="1"/>
</dbReference>
<dbReference type="PROSITE" id="PS00178">
    <property type="entry name" value="AA_TRNA_LIGASE_I"/>
    <property type="match status" value="1"/>
</dbReference>
<keyword id="KW-0030">Aminoacyl-tRNA synthetase</keyword>
<keyword id="KW-0067">ATP-binding</keyword>
<keyword id="KW-0175">Coiled coil</keyword>
<keyword id="KW-0963">Cytoplasm</keyword>
<keyword id="KW-0436">Ligase</keyword>
<keyword id="KW-0547">Nucleotide-binding</keyword>
<keyword id="KW-0648">Protein biosynthesis</keyword>
<keyword id="KW-1185">Reference proteome</keyword>